<name>THIO_RHORU</name>
<reference key="1">
    <citation type="journal article" date="1988" name="J. Bacteriol.">
        <title>Thioredoxin from Rhodospirillum rubrum: primary structure and relation to thioredoxins from other photosynthetic bacteria.</title>
        <authorList>
            <person name="Johnson T.C."/>
            <person name="Yee B.C."/>
            <person name="Carlson D.E."/>
            <person name="Buchanan B.B."/>
            <person name="Johnson R.S."/>
            <person name="Mathews W.R."/>
            <person name="Biemann K."/>
        </authorList>
    </citation>
    <scope>PROTEIN SEQUENCE</scope>
</reference>
<keyword id="KW-0903">Direct protein sequencing</keyword>
<keyword id="KW-1015">Disulfide bond</keyword>
<keyword id="KW-0249">Electron transport</keyword>
<keyword id="KW-0676">Redox-active center</keyword>
<keyword id="KW-0813">Transport</keyword>
<feature type="chain" id="PRO_0000120121" description="Thioredoxin">
    <location>
        <begin position="1"/>
        <end position="104"/>
    </location>
</feature>
<feature type="domain" description="Thioredoxin" evidence="1">
    <location>
        <begin position="2"/>
        <end position="104"/>
    </location>
</feature>
<feature type="disulfide bond" description="Redox-active" evidence="1">
    <location>
        <begin position="29"/>
        <end position="32"/>
    </location>
</feature>
<comment type="function">
    <text>Participates in various redox reactions through the reversible oxidation of its active center dithiol to a disulfide and catalyzes dithiol-disulfide exchange reactions.</text>
</comment>
<comment type="similarity">
    <text evidence="2">Belongs to the thioredoxin family.</text>
</comment>
<comment type="caution">
    <text evidence="2">X's in the sequence are either Ile or Leu.</text>
</comment>
<dbReference type="PIR" id="A28215">
    <property type="entry name" value="A28215"/>
</dbReference>
<dbReference type="GO" id="GO:0005829">
    <property type="term" value="C:cytosol"/>
    <property type="evidence" value="ECO:0007669"/>
    <property type="project" value="TreeGrafter"/>
</dbReference>
<dbReference type="GO" id="GO:0015035">
    <property type="term" value="F:protein-disulfide reductase activity"/>
    <property type="evidence" value="ECO:0007669"/>
    <property type="project" value="InterPro"/>
</dbReference>
<dbReference type="GO" id="GO:0045454">
    <property type="term" value="P:cell redox homeostasis"/>
    <property type="evidence" value="ECO:0007669"/>
    <property type="project" value="TreeGrafter"/>
</dbReference>
<dbReference type="CDD" id="cd02947">
    <property type="entry name" value="TRX_family"/>
    <property type="match status" value="1"/>
</dbReference>
<dbReference type="FunFam" id="3.40.30.10:FF:000001">
    <property type="entry name" value="Thioredoxin"/>
    <property type="match status" value="1"/>
</dbReference>
<dbReference type="Gene3D" id="3.40.30.10">
    <property type="entry name" value="Glutaredoxin"/>
    <property type="match status" value="1"/>
</dbReference>
<dbReference type="InterPro" id="IPR005746">
    <property type="entry name" value="Thioredoxin"/>
</dbReference>
<dbReference type="InterPro" id="IPR036249">
    <property type="entry name" value="Thioredoxin-like_sf"/>
</dbReference>
<dbReference type="InterPro" id="IPR013766">
    <property type="entry name" value="Thioredoxin_domain"/>
</dbReference>
<dbReference type="NCBIfam" id="TIGR01068">
    <property type="entry name" value="thioredoxin"/>
    <property type="match status" value="1"/>
</dbReference>
<dbReference type="PANTHER" id="PTHR45663">
    <property type="entry name" value="GEO12009P1"/>
    <property type="match status" value="1"/>
</dbReference>
<dbReference type="PANTHER" id="PTHR45663:SF11">
    <property type="entry name" value="GEO12009P1"/>
    <property type="match status" value="1"/>
</dbReference>
<dbReference type="Pfam" id="PF00085">
    <property type="entry name" value="Thioredoxin"/>
    <property type="match status" value="1"/>
</dbReference>
<dbReference type="PIRSF" id="PIRSF000077">
    <property type="entry name" value="Thioredoxin"/>
    <property type="match status" value="1"/>
</dbReference>
<dbReference type="PRINTS" id="PR00421">
    <property type="entry name" value="THIOREDOXIN"/>
</dbReference>
<dbReference type="SUPFAM" id="SSF52833">
    <property type="entry name" value="Thioredoxin-like"/>
    <property type="match status" value="1"/>
</dbReference>
<dbReference type="PROSITE" id="PS00194">
    <property type="entry name" value="THIOREDOXIN_1"/>
    <property type="match status" value="1"/>
</dbReference>
<dbReference type="PROSITE" id="PS51352">
    <property type="entry name" value="THIOREDOXIN_2"/>
    <property type="match status" value="1"/>
</dbReference>
<protein>
    <recommendedName>
        <fullName>Thioredoxin</fullName>
        <shortName>Trx</shortName>
    </recommendedName>
</protein>
<sequence length="104" mass="11316">MKQVSDASFEEDVLKADGPNXVDFWAEWCGPCRQXAPALEELATALGDKVTVAKINIDENPQTPSKYGVRGIPTLMIFKDGQVAATKIGALPKTKLFEWVEASV</sequence>
<gene>
    <name type="primary">trxA</name>
</gene>
<organism>
    <name type="scientific">Rhodospirillum rubrum</name>
    <dbReference type="NCBI Taxonomy" id="1085"/>
    <lineage>
        <taxon>Bacteria</taxon>
        <taxon>Pseudomonadati</taxon>
        <taxon>Pseudomonadota</taxon>
        <taxon>Alphaproteobacteria</taxon>
        <taxon>Rhodospirillales</taxon>
        <taxon>Rhodospirillaceae</taxon>
        <taxon>Rhodospirillum</taxon>
    </lineage>
</organism>
<evidence type="ECO:0000255" key="1">
    <source>
        <dbReference type="PROSITE-ProRule" id="PRU00691"/>
    </source>
</evidence>
<evidence type="ECO:0000305" key="2"/>
<proteinExistence type="evidence at protein level"/>
<accession>P10473</accession>